<protein>
    <recommendedName>
        <fullName evidence="12">Amino acid decarboxylase lolD1</fullName>
        <ecNumber evidence="15">4.1.1.-</ecNumber>
    </recommendedName>
    <alternativeName>
        <fullName evidence="11">Loline biosynthesis cluster 1 protein D</fullName>
    </alternativeName>
</protein>
<gene>
    <name evidence="11" type="primary">lolD1</name>
    <name evidence="11" type="synonym">lolD</name>
</gene>
<evidence type="ECO:0000250" key="1">
    <source>
        <dbReference type="UniProtKB" id="P00860"/>
    </source>
</evidence>
<evidence type="ECO:0000250" key="2">
    <source>
        <dbReference type="UniProtKB" id="P07805"/>
    </source>
</evidence>
<evidence type="ECO:0000250" key="3">
    <source>
        <dbReference type="UniProtKB" id="P11926"/>
    </source>
</evidence>
<evidence type="ECO:0000269" key="4">
    <source>
    </source>
</evidence>
<evidence type="ECO:0000269" key="5">
    <source>
    </source>
</evidence>
<evidence type="ECO:0000269" key="6">
    <source>
    </source>
</evidence>
<evidence type="ECO:0000269" key="7">
    <source>
    </source>
</evidence>
<evidence type="ECO:0000269" key="8">
    <source>
    </source>
</evidence>
<evidence type="ECO:0000269" key="9">
    <source>
    </source>
</evidence>
<evidence type="ECO:0000269" key="10">
    <source>
    </source>
</evidence>
<evidence type="ECO:0000303" key="11">
    <source>
    </source>
</evidence>
<evidence type="ECO:0000303" key="12">
    <source>
    </source>
</evidence>
<evidence type="ECO:0000305" key="13"/>
<evidence type="ECO:0000305" key="14">
    <source>
    </source>
</evidence>
<evidence type="ECO:0000305" key="15">
    <source>
    </source>
</evidence>
<evidence type="ECO:0000305" key="16">
    <source>
    </source>
</evidence>
<comment type="function">
    <text evidence="4 5 6 7 8 9 10">Amino acid decarboxylase; part of the gene cluster that mediates the biosynthesis of loline alkaloids, potent insecticidal agents composed of a pyrrolizidine ring system and an uncommon ether bridge linking carbons 2 and 7 (PubMed:15654104). Lolines are structurally differentiated by the various modifications of the L-amino group and include norloline, loline, N-methylloline, N-acetylloline, N-acetylnorloline, and N-formylloline (PubMed:15861432, PubMed:25531527). The first committed step is the condensation of O-acetyl-L-homoserine (derived from L-aspartic acid) and L-proline, probably catalyzed by the gamma-type pyridoxal 5'-phosphate(PLP)-dependent enzyme lolC, to give the diamino diacid, NACPP (PubMed:15861432, PubMed:16755627). Ensuing cyclization, decarboxylation, and acetylation steps yield 1-exo-acetamidopyrrolizidine (AcAP) (PubMed:24374065). LolO is required for installation of the ether bridge upon the pathway intermediate, 1-exo-acetamidopyrrolizidine (AcAP) (PubMed:29537853). In sequential 2-oxoglutarate- and O(2)-consuming steps, lolO removes hydrogens from C2 and C7 of AcAP to form both carbon-oxygen bonds in N-acetylnorloline (NANL), the precursor to all other lolines (PubMed:24374065, PubMed:29537853). The enzymes lolD, lolE, lolF and lolT have also been proposed to be involved in the ether-bridge installation (PubMed:15654104). Further processing of the exocyclic moiety of NANL by fungal N-acetamidase (LolN), methyltransferase (LolM), and cytochrome P450 (LolP) enzymes, with occasional involvement of a plant acetyltransferase, generates the other known lolines (PubMed:18655839, PubMed:25531527). LolN transforms NANL to norlonine which is monomethylated and dimethylated to respectively lonine and N-methyllonine (NML) by lolM (PubMed:25531527). LolP catalyzes hydroxylation of the methyl group in N-methylloline (NML) and further oxygenation to N-formylloline (NFL) (PubMed:18655839). A plant acetyltransferase is responsible for the acetylation of loline to form N-acetylloline (NAL) (PubMed:25531527). LolA might interact with aspartate kinase to prevent feedback inhibition of its activity by these end products and thereby promote production of L-homoserine from L-aspartate (PubMed:15654104).</text>
</comment>
<comment type="cofactor">
    <cofactor evidence="1">
        <name>pyridoxal 5'-phosphate</name>
        <dbReference type="ChEBI" id="CHEBI:597326"/>
    </cofactor>
</comment>
<comment type="pathway">
    <text evidence="14">Alkaloid biosynthesis.</text>
</comment>
<comment type="subunit">
    <text evidence="1">Homodimer (By similarity).</text>
</comment>
<comment type="induction">
    <text evidence="4">Expression is induced in loline alkaloid-producing cultures as well as in planta (PubMed:15654104).</text>
</comment>
<comment type="biotechnology">
    <text evidence="16">Loline alkaloids show broad-spectrum anti-insect activity, and different lolines may have different biological activities (PubMed:25531527). In vitro tests of NFL, NAL, NML, and semisynthetic loline derivatives with long carbon-chain acylations on the 1-amine have shown that many are effective against both fall armyworm larvae and European corn borer larvae, but the effects seem to differ depending on the modifications (PubMed:25531527). N-Formylloline reduces the weight gain of fall armyworms by deterring feeding, and does not significantly affect corn borers (PubMed:25531527). In contrast, NAL reduces the weight gain of corn borer larvae without changing larval feeding behavior, indicating that its effect is due to metabolic toxicity. N-formylloline, NAL, and NML are almost as potent as nicotine in insecticidal activity against green bugs (PubMed:25531527).</text>
</comment>
<comment type="similarity">
    <text evidence="13">Belongs to the Orn/Lys/Arg decarboxylase class-II family.</text>
</comment>
<feature type="chain" id="PRO_0000444347" description="Amino acid decarboxylase lolD1">
    <location>
        <begin position="1"/>
        <end position="420"/>
    </location>
</feature>
<feature type="active site" description="Proton donor; shared with dimeric partner" evidence="1">
    <location>
        <position position="351"/>
    </location>
</feature>
<feature type="binding site" evidence="3">
    <location>
        <position position="194"/>
    </location>
    <ligand>
        <name>pyridoxal 5'-phosphate</name>
        <dbReference type="ChEBI" id="CHEBI:597326"/>
    </ligand>
</feature>
<feature type="binding site" evidence="1">
    <location>
        <position position="231"/>
    </location>
    <ligand>
        <name>pyridoxal 5'-phosphate</name>
        <dbReference type="ChEBI" id="CHEBI:597326"/>
    </ligand>
</feature>
<feature type="binding site" evidence="1">
    <location>
        <begin position="266"/>
        <end position="269"/>
    </location>
    <ligand>
        <name>pyridoxal 5'-phosphate</name>
        <dbReference type="ChEBI" id="CHEBI:597326"/>
    </ligand>
</feature>
<feature type="binding site" description="in other chain" evidence="2">
    <location>
        <begin position="315"/>
        <end position="316"/>
    </location>
    <ligand>
        <name>substrate</name>
        <note>ligand shared between dimeric partners</note>
    </ligand>
</feature>
<feature type="binding site" evidence="2">
    <location>
        <position position="352"/>
    </location>
    <ligand>
        <name>substrate</name>
        <note>ligand shared between dimeric partners</note>
    </ligand>
</feature>
<feature type="binding site" evidence="1">
    <location>
        <position position="381"/>
    </location>
    <ligand>
        <name>pyridoxal 5'-phosphate</name>
        <dbReference type="ChEBI" id="CHEBI:597326"/>
    </ligand>
</feature>
<feature type="site" description="Stacks against the aromatic ring of pyridoxal phosphate and stabilizes reaction intermediates" evidence="1">
    <location>
        <position position="190"/>
    </location>
</feature>
<feature type="modified residue" description="N6-(pyridoxal phosphate)lysine" evidence="1">
    <location>
        <position position="62"/>
    </location>
</feature>
<feature type="modified residue" description="S-nitrosocysteine" evidence="3">
    <location>
        <position position="351"/>
    </location>
</feature>
<keyword id="KW-0017">Alkaloid metabolism</keyword>
<keyword id="KW-0210">Decarboxylase</keyword>
<keyword id="KW-0456">Lyase</keyword>
<keyword id="KW-0663">Pyridoxal phosphate</keyword>
<keyword id="KW-0702">S-nitrosylation</keyword>
<organism>
    <name type="scientific">Epichloe uncinata</name>
    <name type="common">Endophyte fungus</name>
    <name type="synonym">Neotyphodium uncinatum</name>
    <dbReference type="NCBI Taxonomy" id="5050"/>
    <lineage>
        <taxon>Eukaryota</taxon>
        <taxon>Fungi</taxon>
        <taxon>Dikarya</taxon>
        <taxon>Ascomycota</taxon>
        <taxon>Pezizomycotina</taxon>
        <taxon>Sordariomycetes</taxon>
        <taxon>Hypocreomycetidae</taxon>
        <taxon>Hypocreales</taxon>
        <taxon>Clavicipitaceae</taxon>
        <taxon>Epichloe</taxon>
    </lineage>
</organism>
<reference key="1">
    <citation type="journal article" date="2005" name="Genetics">
        <title>Gene clusters for insecticidal loline alkaloids in the grass-endophytic fungus Neotyphodium uncinatum.</title>
        <authorList>
            <person name="Spiering M.J."/>
            <person name="Moon C.D."/>
            <person name="Wilkinson H.H."/>
            <person name="Schardl C.L."/>
        </authorList>
    </citation>
    <scope>NUCLEOTIDE SEQUENCE [GENOMIC DNA]</scope>
    <scope>INDUCTION</scope>
    <scope>FUNCTION</scope>
    <source>
        <strain>CBS 102646</strain>
    </source>
</reference>
<reference key="2">
    <citation type="journal article" date="2005" name="ChemBioChem">
        <title>Biosynthetic precursors of fungal pyrrolizidines, the loline alkaloids.</title>
        <authorList>
            <person name="Blankenship J.D."/>
            <person name="Houseknecht J.B."/>
            <person name="Pal S."/>
            <person name="Bush L.P."/>
            <person name="Grossman R.B."/>
            <person name="Schardl C.L."/>
        </authorList>
    </citation>
    <scope>FUNCTION</scope>
</reference>
<reference key="3">
    <citation type="journal article" date="2006" name="ChemBioChem">
        <title>On the sequence of bond formation in loline alkaloid biosynthesis.</title>
        <authorList>
            <person name="Faulkner J.R."/>
            <person name="Hussaini S.R."/>
            <person name="Blankenship J.D."/>
            <person name="Pal S."/>
            <person name="Branan B.M."/>
            <person name="Grossman R.B."/>
            <person name="Schardl C.L."/>
        </authorList>
    </citation>
    <scope>FUNCTION</scope>
</reference>
<reference key="4">
    <citation type="journal article" date="2008" name="Fungal Genet. Biol.">
        <title>Role of the LolP cytochrome P450 monooxygenase in loline alkaloid biosynthesis.</title>
        <authorList>
            <person name="Spiering M.J."/>
            <person name="Faulkner J.R."/>
            <person name="Zhang D.X."/>
            <person name="Machado C."/>
            <person name="Grossman R.B."/>
            <person name="Schardl C.L."/>
        </authorList>
    </citation>
    <scope>FUNCTION</scope>
    <source>
        <strain>CBS 102646</strain>
    </source>
</reference>
<reference key="5">
    <citation type="journal article" date="2014" name="Phytochemistry">
        <title>Ether bridge formation in loline alkaloid biosynthesis.</title>
        <authorList>
            <person name="Pan J."/>
            <person name="Bhardwaj M."/>
            <person name="Faulkner J.R."/>
            <person name="Nagabhyru P."/>
            <person name="Charlton N.D."/>
            <person name="Higashi R.M."/>
            <person name="Miller A.F."/>
            <person name="Young C.A."/>
            <person name="Grossman R.B."/>
            <person name="Schardl C.L."/>
        </authorList>
    </citation>
    <scope>FUNCTION</scope>
</reference>
<reference key="6">
    <citation type="journal article" date="2014" name="PLoS ONE">
        <title>Enzymes from fungal and plant origin required for chemical diversification of insecticidal loline alkaloids in grass-Epichloe symbiota.</title>
        <authorList>
            <person name="Pan J."/>
            <person name="Bhardwaj M."/>
            <person name="Nagabhyru P."/>
            <person name="Grossman R.B."/>
            <person name="Schardl C.L."/>
        </authorList>
    </citation>
    <scope>FUNCTION</scope>
    <scope>BIOTECHNOLOGY</scope>
</reference>
<reference key="7">
    <citation type="journal article" date="2018" name="Biochemistry">
        <title>Installation of the ether bridge of lolines by the iron- and 2-oxoglutarate-dependent oxygenase, lolO: regio- and stereochemistry of sequential hydroxylation and oxacyclization reactions.</title>
        <authorList>
            <person name="Pan J."/>
            <person name="Bhardwaj M."/>
            <person name="Zhang B."/>
            <person name="Chang W.C."/>
            <person name="Schardl C.L."/>
            <person name="Krebs C."/>
            <person name="Grossman R.B."/>
            <person name="Bollinger J.M. Jr."/>
        </authorList>
    </citation>
    <scope>FUNCTION</scope>
</reference>
<name>LOLD1_EPIUN</name>
<sequence>MATVVREAFENHVKLVESRNSPGHVLASSEASFFVADLNDIVRKWAAWKKALPDVTPFFAVKSSYDRRLIQTLATCGAGFDCASVEEIELILSLGIGAERIVFTHPCKPVSSLGLCRKLGITLITFDNECELRKLHHHYPEAQTVLRVFADDPTNADPLGTKFGAAREDIDGLVRLVKELNMKLAGASFHAAPSVAVDAAAYVRGIRDAAEVFARARRVGLNPTVLDIGGGYTDSTFQQIAGAVRPAIAECFKSQVVEGRLRILAEPGTLFSCSPFYLAVKVVARRRNAAAFGNEPATRLYINDGIYSNFMMRFIVNMTFSPVAVIRKGVWYDQTEQTMRREACSLWGRSCDSNDCINRDCRLDPEVGVGDWLVFKDMGAYTTVCNTTFNGFTSSNHTIYIEPTQVDKAQSTFEQLELAI</sequence>
<accession>Q5MNI5</accession>
<proteinExistence type="evidence at transcript level"/>
<dbReference type="EC" id="4.1.1.-" evidence="15"/>
<dbReference type="EMBL" id="AY723749">
    <property type="protein sequence ID" value="AAV68704.1"/>
    <property type="molecule type" value="Genomic_DNA"/>
</dbReference>
<dbReference type="SMR" id="Q5MNI5"/>
<dbReference type="GO" id="GO:0005737">
    <property type="term" value="C:cytoplasm"/>
    <property type="evidence" value="ECO:0007669"/>
    <property type="project" value="TreeGrafter"/>
</dbReference>
<dbReference type="GO" id="GO:0004586">
    <property type="term" value="F:ornithine decarboxylase activity"/>
    <property type="evidence" value="ECO:0007669"/>
    <property type="project" value="TreeGrafter"/>
</dbReference>
<dbReference type="GO" id="GO:0009820">
    <property type="term" value="P:alkaloid metabolic process"/>
    <property type="evidence" value="ECO:0007669"/>
    <property type="project" value="UniProtKB-KW"/>
</dbReference>
<dbReference type="GO" id="GO:0033387">
    <property type="term" value="P:putrescine biosynthetic process from arginine, via ornithine"/>
    <property type="evidence" value="ECO:0007669"/>
    <property type="project" value="TreeGrafter"/>
</dbReference>
<dbReference type="CDD" id="cd00622">
    <property type="entry name" value="PLPDE_III_ODC"/>
    <property type="match status" value="1"/>
</dbReference>
<dbReference type="FunFam" id="3.20.20.10:FF:000005">
    <property type="entry name" value="Ornithine decarboxylase"/>
    <property type="match status" value="1"/>
</dbReference>
<dbReference type="Gene3D" id="3.20.20.10">
    <property type="entry name" value="Alanine racemase"/>
    <property type="match status" value="1"/>
</dbReference>
<dbReference type="Gene3D" id="2.40.37.10">
    <property type="entry name" value="Lyase, Ornithine Decarboxylase, Chain A, domain 1"/>
    <property type="match status" value="1"/>
</dbReference>
<dbReference type="InterPro" id="IPR009006">
    <property type="entry name" value="Ala_racemase/Decarboxylase_C"/>
</dbReference>
<dbReference type="InterPro" id="IPR022643">
    <property type="entry name" value="De-COase2_C"/>
</dbReference>
<dbReference type="InterPro" id="IPR022657">
    <property type="entry name" value="De-COase2_CS"/>
</dbReference>
<dbReference type="InterPro" id="IPR022644">
    <property type="entry name" value="De-COase2_N"/>
</dbReference>
<dbReference type="InterPro" id="IPR000183">
    <property type="entry name" value="Orn/DAP/Arg_de-COase"/>
</dbReference>
<dbReference type="InterPro" id="IPR002433">
    <property type="entry name" value="Orn_de-COase"/>
</dbReference>
<dbReference type="InterPro" id="IPR029066">
    <property type="entry name" value="PLP-binding_barrel"/>
</dbReference>
<dbReference type="PANTHER" id="PTHR11482">
    <property type="entry name" value="ARGININE/DIAMINOPIMELATE/ORNITHINE DECARBOXYLASE"/>
    <property type="match status" value="1"/>
</dbReference>
<dbReference type="PANTHER" id="PTHR11482:SF6">
    <property type="entry name" value="ORNITHINE DECARBOXYLASE 1-RELATED"/>
    <property type="match status" value="1"/>
</dbReference>
<dbReference type="Pfam" id="PF02784">
    <property type="entry name" value="Orn_Arg_deC_N"/>
    <property type="match status" value="1"/>
</dbReference>
<dbReference type="Pfam" id="PF00278">
    <property type="entry name" value="Orn_DAP_Arg_deC"/>
    <property type="match status" value="1"/>
</dbReference>
<dbReference type="PRINTS" id="PR01179">
    <property type="entry name" value="ODADCRBXLASE"/>
</dbReference>
<dbReference type="PRINTS" id="PR01182">
    <property type="entry name" value="ORNDCRBXLASE"/>
</dbReference>
<dbReference type="SUPFAM" id="SSF50621">
    <property type="entry name" value="Alanine racemase C-terminal domain-like"/>
    <property type="match status" value="1"/>
</dbReference>
<dbReference type="SUPFAM" id="SSF51419">
    <property type="entry name" value="PLP-binding barrel"/>
    <property type="match status" value="1"/>
</dbReference>
<dbReference type="PROSITE" id="PS00879">
    <property type="entry name" value="ODR_DC_2_2"/>
    <property type="match status" value="1"/>
</dbReference>